<comment type="function">
    <text evidence="1">Nucleoside triphosphate pyrophosphatase. May have a dual role in cell division arrest and in preventing the incorporation of modified nucleotides into cellular nucleic acids.</text>
</comment>
<comment type="catalytic activity">
    <reaction evidence="1">
        <text>a ribonucleoside 5'-triphosphate + H2O = a ribonucleoside 5'-phosphate + diphosphate + H(+)</text>
        <dbReference type="Rhea" id="RHEA:23996"/>
        <dbReference type="ChEBI" id="CHEBI:15377"/>
        <dbReference type="ChEBI" id="CHEBI:15378"/>
        <dbReference type="ChEBI" id="CHEBI:33019"/>
        <dbReference type="ChEBI" id="CHEBI:58043"/>
        <dbReference type="ChEBI" id="CHEBI:61557"/>
        <dbReference type="EC" id="3.6.1.9"/>
    </reaction>
</comment>
<comment type="catalytic activity">
    <reaction evidence="1">
        <text>a 2'-deoxyribonucleoside 5'-triphosphate + H2O = a 2'-deoxyribonucleoside 5'-phosphate + diphosphate + H(+)</text>
        <dbReference type="Rhea" id="RHEA:44644"/>
        <dbReference type="ChEBI" id="CHEBI:15377"/>
        <dbReference type="ChEBI" id="CHEBI:15378"/>
        <dbReference type="ChEBI" id="CHEBI:33019"/>
        <dbReference type="ChEBI" id="CHEBI:61560"/>
        <dbReference type="ChEBI" id="CHEBI:65317"/>
        <dbReference type="EC" id="3.6.1.9"/>
    </reaction>
</comment>
<comment type="cofactor">
    <cofactor evidence="1">
        <name>a divalent metal cation</name>
        <dbReference type="ChEBI" id="CHEBI:60240"/>
    </cofactor>
</comment>
<comment type="subcellular location">
    <subcellularLocation>
        <location evidence="1">Cytoplasm</location>
    </subcellularLocation>
</comment>
<comment type="similarity">
    <text evidence="1">Belongs to the Maf family.</text>
</comment>
<accession>Q0AKD7</accession>
<name>NTPP_MARMM</name>
<evidence type="ECO:0000255" key="1">
    <source>
        <dbReference type="HAMAP-Rule" id="MF_00528"/>
    </source>
</evidence>
<reference key="1">
    <citation type="submission" date="2006-08" db="EMBL/GenBank/DDBJ databases">
        <title>Complete sequence of Maricaulis maris MCS10.</title>
        <authorList>
            <consortium name="US DOE Joint Genome Institute"/>
            <person name="Copeland A."/>
            <person name="Lucas S."/>
            <person name="Lapidus A."/>
            <person name="Barry K."/>
            <person name="Detter J.C."/>
            <person name="Glavina del Rio T."/>
            <person name="Hammon N."/>
            <person name="Israni S."/>
            <person name="Dalin E."/>
            <person name="Tice H."/>
            <person name="Pitluck S."/>
            <person name="Saunders E."/>
            <person name="Brettin T."/>
            <person name="Bruce D."/>
            <person name="Han C."/>
            <person name="Tapia R."/>
            <person name="Gilna P."/>
            <person name="Schmutz J."/>
            <person name="Larimer F."/>
            <person name="Land M."/>
            <person name="Hauser L."/>
            <person name="Kyrpides N."/>
            <person name="Mikhailova N."/>
            <person name="Viollier P."/>
            <person name="Stephens C."/>
            <person name="Richardson P."/>
        </authorList>
    </citation>
    <scope>NUCLEOTIDE SEQUENCE [LARGE SCALE GENOMIC DNA]</scope>
    <source>
        <strain>MCS10</strain>
    </source>
</reference>
<protein>
    <recommendedName>
        <fullName evidence="1">Nucleoside triphosphate pyrophosphatase</fullName>
        <ecNumber evidence="1">3.6.1.9</ecNumber>
    </recommendedName>
    <alternativeName>
        <fullName evidence="1">Nucleotide pyrophosphatase</fullName>
        <shortName evidence="1">Nucleotide PPase</shortName>
    </alternativeName>
</protein>
<feature type="chain" id="PRO_0000267336" description="Nucleoside triphosphate pyrophosphatase">
    <location>
        <begin position="1"/>
        <end position="196"/>
    </location>
</feature>
<feature type="active site" description="Proton acceptor" evidence="1">
    <location>
        <position position="73"/>
    </location>
</feature>
<keyword id="KW-0963">Cytoplasm</keyword>
<keyword id="KW-0378">Hydrolase</keyword>
<keyword id="KW-0546">Nucleotide metabolism</keyword>
<keyword id="KW-1185">Reference proteome</keyword>
<organism>
    <name type="scientific">Maricaulis maris (strain MCS10)</name>
    <name type="common">Caulobacter maris</name>
    <dbReference type="NCBI Taxonomy" id="394221"/>
    <lineage>
        <taxon>Bacteria</taxon>
        <taxon>Pseudomonadati</taxon>
        <taxon>Pseudomonadota</taxon>
        <taxon>Alphaproteobacteria</taxon>
        <taxon>Maricaulales</taxon>
        <taxon>Maricaulaceae</taxon>
        <taxon>Maricaulis</taxon>
    </lineage>
</organism>
<sequence length="196" mass="21623">MTRFILASGSQIRADILRQAHIPFEIIKSDVDESVIKAERADLSPRDMALCLAEAKVEPVSLAHPDALVLGADQTMELDGELLDKLPQASLARARLERMRGRPHFLHSGLALLRAGQPVWRYQQTSTIHVRGFSDAFLDQYLENAGFALTASVGAYAYEGLGSQLFERVEGDYYAILGLPLLPLTAVLRDHGVLQQ</sequence>
<proteinExistence type="inferred from homology"/>
<gene>
    <name type="ordered locus">Mmar10_2975</name>
</gene>
<dbReference type="EC" id="3.6.1.9" evidence="1"/>
<dbReference type="EMBL" id="CP000449">
    <property type="protein sequence ID" value="ABI67256.1"/>
    <property type="molecule type" value="Genomic_DNA"/>
</dbReference>
<dbReference type="RefSeq" id="WP_011644900.1">
    <property type="nucleotide sequence ID" value="NC_008347.1"/>
</dbReference>
<dbReference type="SMR" id="Q0AKD7"/>
<dbReference type="STRING" id="394221.Mmar10_2975"/>
<dbReference type="KEGG" id="mmr:Mmar10_2975"/>
<dbReference type="eggNOG" id="COG0424">
    <property type="taxonomic scope" value="Bacteria"/>
</dbReference>
<dbReference type="HOGENOM" id="CLU_040416_1_1_5"/>
<dbReference type="OrthoDB" id="9813962at2"/>
<dbReference type="Proteomes" id="UP000001964">
    <property type="component" value="Chromosome"/>
</dbReference>
<dbReference type="GO" id="GO:0005737">
    <property type="term" value="C:cytoplasm"/>
    <property type="evidence" value="ECO:0007669"/>
    <property type="project" value="UniProtKB-SubCell"/>
</dbReference>
<dbReference type="GO" id="GO:0047429">
    <property type="term" value="F:nucleoside triphosphate diphosphatase activity"/>
    <property type="evidence" value="ECO:0007669"/>
    <property type="project" value="UniProtKB-EC"/>
</dbReference>
<dbReference type="GO" id="GO:0009117">
    <property type="term" value="P:nucleotide metabolic process"/>
    <property type="evidence" value="ECO:0007669"/>
    <property type="project" value="UniProtKB-KW"/>
</dbReference>
<dbReference type="CDD" id="cd00555">
    <property type="entry name" value="Maf"/>
    <property type="match status" value="1"/>
</dbReference>
<dbReference type="Gene3D" id="3.90.950.10">
    <property type="match status" value="1"/>
</dbReference>
<dbReference type="HAMAP" id="MF_00528">
    <property type="entry name" value="Maf"/>
    <property type="match status" value="1"/>
</dbReference>
<dbReference type="InterPro" id="IPR029001">
    <property type="entry name" value="ITPase-like_fam"/>
</dbReference>
<dbReference type="InterPro" id="IPR003697">
    <property type="entry name" value="Maf-like"/>
</dbReference>
<dbReference type="PANTHER" id="PTHR43213">
    <property type="entry name" value="BIFUNCTIONAL DTTP/UTP PYROPHOSPHATASE/METHYLTRANSFERASE PROTEIN-RELATED"/>
    <property type="match status" value="1"/>
</dbReference>
<dbReference type="PANTHER" id="PTHR43213:SF5">
    <property type="entry name" value="BIFUNCTIONAL DTTP_UTP PYROPHOSPHATASE_METHYLTRANSFERASE PROTEIN-RELATED"/>
    <property type="match status" value="1"/>
</dbReference>
<dbReference type="Pfam" id="PF02545">
    <property type="entry name" value="Maf"/>
    <property type="match status" value="1"/>
</dbReference>
<dbReference type="PIRSF" id="PIRSF006305">
    <property type="entry name" value="Maf"/>
    <property type="match status" value="1"/>
</dbReference>
<dbReference type="SUPFAM" id="SSF52972">
    <property type="entry name" value="ITPase-like"/>
    <property type="match status" value="1"/>
</dbReference>